<reference key="1">
    <citation type="journal article" date="2006" name="Proc. Natl. Acad. Sci. U.S.A.">
        <title>Comparative genomics of the lactic acid bacteria.</title>
        <authorList>
            <person name="Makarova K.S."/>
            <person name="Slesarev A."/>
            <person name="Wolf Y.I."/>
            <person name="Sorokin A."/>
            <person name="Mirkin B."/>
            <person name="Koonin E.V."/>
            <person name="Pavlov A."/>
            <person name="Pavlova N."/>
            <person name="Karamychev V."/>
            <person name="Polouchine N."/>
            <person name="Shakhova V."/>
            <person name="Grigoriev I."/>
            <person name="Lou Y."/>
            <person name="Rohksar D."/>
            <person name="Lucas S."/>
            <person name="Huang K."/>
            <person name="Goodstein D.M."/>
            <person name="Hawkins T."/>
            <person name="Plengvidhya V."/>
            <person name="Welker D."/>
            <person name="Hughes J."/>
            <person name="Goh Y."/>
            <person name="Benson A."/>
            <person name="Baldwin K."/>
            <person name="Lee J.-H."/>
            <person name="Diaz-Muniz I."/>
            <person name="Dosti B."/>
            <person name="Smeianov V."/>
            <person name="Wechter W."/>
            <person name="Barabote R."/>
            <person name="Lorca G."/>
            <person name="Altermann E."/>
            <person name="Barrangou R."/>
            <person name="Ganesan B."/>
            <person name="Xie Y."/>
            <person name="Rawsthorne H."/>
            <person name="Tamir D."/>
            <person name="Parker C."/>
            <person name="Breidt F."/>
            <person name="Broadbent J.R."/>
            <person name="Hutkins R."/>
            <person name="O'Sullivan D."/>
            <person name="Steele J."/>
            <person name="Unlu G."/>
            <person name="Saier M.H. Jr."/>
            <person name="Klaenhammer T."/>
            <person name="Richardson P."/>
            <person name="Kozyavkin S."/>
            <person name="Weimer B.C."/>
            <person name="Mills D.A."/>
        </authorList>
    </citation>
    <scope>NUCLEOTIDE SEQUENCE [LARGE SCALE GENOMIC DNA]</scope>
    <source>
        <strain>ATCC BAA-365 / Lb-18</strain>
    </source>
</reference>
<sequence>MKRALVSVSDKNNLVPFVKGLVANDYEIVSTGGTKRVLDEAGIPTISVEDVTGFPEILDGRVKTLNPYIHGGLLARRELPEHVATLKEHKITPIDLVCVNLYPFKQTIEKPDVTLAEAIENIDIGGPSMVRSASKNYRDVTIVVDQADYDQVLAEIEKDGSTSLETRARLAAKAFRLTASYDALISQYLTEKAGETAPEKLTLTYDLKEAMRYGENSHQKAWLYEDALPKAFSVLQAEQLNGKELSYNNIKDADEALRCVREFSKPTVVAMKHMNPCGIGQGNTLEEAWDRAYVADPVSIFGGVIALNRKVDLATAEKMHKIFLEIIIAPDYDEDALAALKTKKKNLRILKLDFSKKDEATSKETVSVMGGLLVQDQDVLDEDFADWECVTEAKPTQEQLESLLFAWKAVKHTKSNAIVVANNERTLGVGAGQPNRIDSEKIAIDHAAEALDDRAVLASDAFFPFSDCVEYAGKHGIKAIVQPGGSVRDQESIDMANKYGIAMVFTGVRHFRH</sequence>
<gene>
    <name evidence="1" type="primary">purH</name>
    <name type="ordered locus">LBUL_1331</name>
</gene>
<dbReference type="EC" id="2.1.2.3" evidence="1"/>
<dbReference type="EC" id="3.5.4.10" evidence="1"/>
<dbReference type="EMBL" id="CP000412">
    <property type="protein sequence ID" value="ABJ58851.1"/>
    <property type="molecule type" value="Genomic_DNA"/>
</dbReference>
<dbReference type="RefSeq" id="WP_003618422.1">
    <property type="nucleotide sequence ID" value="NC_008529.1"/>
</dbReference>
<dbReference type="SMR" id="Q049M1"/>
<dbReference type="KEGG" id="lbu:LBUL_1331"/>
<dbReference type="HOGENOM" id="CLU_016316_5_2_9"/>
<dbReference type="BioCyc" id="LDEL321956:LBUL_RS06280-MONOMER"/>
<dbReference type="UniPathway" id="UPA00074">
    <property type="reaction ID" value="UER00133"/>
</dbReference>
<dbReference type="UniPathway" id="UPA00074">
    <property type="reaction ID" value="UER00135"/>
</dbReference>
<dbReference type="GO" id="GO:0005829">
    <property type="term" value="C:cytosol"/>
    <property type="evidence" value="ECO:0007669"/>
    <property type="project" value="TreeGrafter"/>
</dbReference>
<dbReference type="GO" id="GO:0003937">
    <property type="term" value="F:IMP cyclohydrolase activity"/>
    <property type="evidence" value="ECO:0007669"/>
    <property type="project" value="UniProtKB-UniRule"/>
</dbReference>
<dbReference type="GO" id="GO:0004643">
    <property type="term" value="F:phosphoribosylaminoimidazolecarboxamide formyltransferase activity"/>
    <property type="evidence" value="ECO:0007669"/>
    <property type="project" value="UniProtKB-UniRule"/>
</dbReference>
<dbReference type="GO" id="GO:0006189">
    <property type="term" value="P:'de novo' IMP biosynthetic process"/>
    <property type="evidence" value="ECO:0007669"/>
    <property type="project" value="UniProtKB-UniRule"/>
</dbReference>
<dbReference type="CDD" id="cd01421">
    <property type="entry name" value="IMPCH"/>
    <property type="match status" value="1"/>
</dbReference>
<dbReference type="FunFam" id="3.40.140.20:FF:000001">
    <property type="entry name" value="Bifunctional purine biosynthesis protein PurH"/>
    <property type="match status" value="1"/>
</dbReference>
<dbReference type="FunFam" id="3.40.140.20:FF:000002">
    <property type="entry name" value="Bifunctional purine biosynthesis protein PurH"/>
    <property type="match status" value="1"/>
</dbReference>
<dbReference type="FunFam" id="3.40.50.1380:FF:000001">
    <property type="entry name" value="Bifunctional purine biosynthesis protein PurH"/>
    <property type="match status" value="1"/>
</dbReference>
<dbReference type="Gene3D" id="3.40.140.20">
    <property type="match status" value="2"/>
</dbReference>
<dbReference type="Gene3D" id="3.40.50.1380">
    <property type="entry name" value="Methylglyoxal synthase-like domain"/>
    <property type="match status" value="1"/>
</dbReference>
<dbReference type="HAMAP" id="MF_00139">
    <property type="entry name" value="PurH"/>
    <property type="match status" value="1"/>
</dbReference>
<dbReference type="InterPro" id="IPR024051">
    <property type="entry name" value="AICAR_Tfase_dup_dom_sf"/>
</dbReference>
<dbReference type="InterPro" id="IPR016193">
    <property type="entry name" value="Cytidine_deaminase-like"/>
</dbReference>
<dbReference type="InterPro" id="IPR011607">
    <property type="entry name" value="MGS-like_dom"/>
</dbReference>
<dbReference type="InterPro" id="IPR036914">
    <property type="entry name" value="MGS-like_dom_sf"/>
</dbReference>
<dbReference type="InterPro" id="IPR002695">
    <property type="entry name" value="PurH-like"/>
</dbReference>
<dbReference type="NCBIfam" id="NF002049">
    <property type="entry name" value="PRK00881.1"/>
    <property type="match status" value="1"/>
</dbReference>
<dbReference type="NCBIfam" id="TIGR00355">
    <property type="entry name" value="purH"/>
    <property type="match status" value="1"/>
</dbReference>
<dbReference type="PANTHER" id="PTHR11692:SF0">
    <property type="entry name" value="BIFUNCTIONAL PURINE BIOSYNTHESIS PROTEIN ATIC"/>
    <property type="match status" value="1"/>
</dbReference>
<dbReference type="PANTHER" id="PTHR11692">
    <property type="entry name" value="BIFUNCTIONAL PURINE BIOSYNTHESIS PROTEIN PURH"/>
    <property type="match status" value="1"/>
</dbReference>
<dbReference type="Pfam" id="PF01808">
    <property type="entry name" value="AICARFT_IMPCHas"/>
    <property type="match status" value="1"/>
</dbReference>
<dbReference type="Pfam" id="PF02142">
    <property type="entry name" value="MGS"/>
    <property type="match status" value="1"/>
</dbReference>
<dbReference type="PIRSF" id="PIRSF000414">
    <property type="entry name" value="AICARFT_IMPCHas"/>
    <property type="match status" value="1"/>
</dbReference>
<dbReference type="SMART" id="SM00798">
    <property type="entry name" value="AICARFT_IMPCHas"/>
    <property type="match status" value="1"/>
</dbReference>
<dbReference type="SMART" id="SM00851">
    <property type="entry name" value="MGS"/>
    <property type="match status" value="1"/>
</dbReference>
<dbReference type="SUPFAM" id="SSF53927">
    <property type="entry name" value="Cytidine deaminase-like"/>
    <property type="match status" value="1"/>
</dbReference>
<dbReference type="SUPFAM" id="SSF52335">
    <property type="entry name" value="Methylglyoxal synthase-like"/>
    <property type="match status" value="1"/>
</dbReference>
<dbReference type="PROSITE" id="PS51855">
    <property type="entry name" value="MGS"/>
    <property type="match status" value="1"/>
</dbReference>
<comment type="catalytic activity">
    <reaction evidence="1">
        <text>(6R)-10-formyltetrahydrofolate + 5-amino-1-(5-phospho-beta-D-ribosyl)imidazole-4-carboxamide = 5-formamido-1-(5-phospho-D-ribosyl)imidazole-4-carboxamide + (6S)-5,6,7,8-tetrahydrofolate</text>
        <dbReference type="Rhea" id="RHEA:22192"/>
        <dbReference type="ChEBI" id="CHEBI:57453"/>
        <dbReference type="ChEBI" id="CHEBI:58467"/>
        <dbReference type="ChEBI" id="CHEBI:58475"/>
        <dbReference type="ChEBI" id="CHEBI:195366"/>
        <dbReference type="EC" id="2.1.2.3"/>
    </reaction>
</comment>
<comment type="catalytic activity">
    <reaction evidence="1">
        <text>IMP + H2O = 5-formamido-1-(5-phospho-D-ribosyl)imidazole-4-carboxamide</text>
        <dbReference type="Rhea" id="RHEA:18445"/>
        <dbReference type="ChEBI" id="CHEBI:15377"/>
        <dbReference type="ChEBI" id="CHEBI:58053"/>
        <dbReference type="ChEBI" id="CHEBI:58467"/>
        <dbReference type="EC" id="3.5.4.10"/>
    </reaction>
</comment>
<comment type="pathway">
    <text evidence="1">Purine metabolism; IMP biosynthesis via de novo pathway; 5-formamido-1-(5-phospho-D-ribosyl)imidazole-4-carboxamide from 5-amino-1-(5-phospho-D-ribosyl)imidazole-4-carboxamide (10-formyl THF route): step 1/1.</text>
</comment>
<comment type="pathway">
    <text evidence="1">Purine metabolism; IMP biosynthesis via de novo pathway; IMP from 5-formamido-1-(5-phospho-D-ribosyl)imidazole-4-carboxamide: step 1/1.</text>
</comment>
<comment type="domain">
    <text evidence="1">The IMP cyclohydrolase activity resides in the N-terminal region.</text>
</comment>
<comment type="similarity">
    <text evidence="1">Belongs to the PurH family.</text>
</comment>
<keyword id="KW-0378">Hydrolase</keyword>
<keyword id="KW-0511">Multifunctional enzyme</keyword>
<keyword id="KW-0658">Purine biosynthesis</keyword>
<keyword id="KW-0808">Transferase</keyword>
<evidence type="ECO:0000255" key="1">
    <source>
        <dbReference type="HAMAP-Rule" id="MF_00139"/>
    </source>
</evidence>
<evidence type="ECO:0000255" key="2">
    <source>
        <dbReference type="PROSITE-ProRule" id="PRU01202"/>
    </source>
</evidence>
<organism>
    <name type="scientific">Lactobacillus delbrueckii subsp. bulgaricus (strain ATCC BAA-365 / Lb-18)</name>
    <dbReference type="NCBI Taxonomy" id="321956"/>
    <lineage>
        <taxon>Bacteria</taxon>
        <taxon>Bacillati</taxon>
        <taxon>Bacillota</taxon>
        <taxon>Bacilli</taxon>
        <taxon>Lactobacillales</taxon>
        <taxon>Lactobacillaceae</taxon>
        <taxon>Lactobacillus</taxon>
    </lineage>
</organism>
<feature type="chain" id="PRO_1000018899" description="Bifunctional purine biosynthesis protein PurH">
    <location>
        <begin position="1"/>
        <end position="513"/>
    </location>
</feature>
<feature type="domain" description="MGS-like" evidence="2">
    <location>
        <begin position="1"/>
        <end position="144"/>
    </location>
</feature>
<name>PUR9_LACDB</name>
<proteinExistence type="inferred from homology"/>
<accession>Q049M1</accession>
<protein>
    <recommendedName>
        <fullName evidence="1">Bifunctional purine biosynthesis protein PurH</fullName>
    </recommendedName>
    <domain>
        <recommendedName>
            <fullName evidence="1">Phosphoribosylaminoimidazolecarboxamide formyltransferase</fullName>
            <ecNumber evidence="1">2.1.2.3</ecNumber>
        </recommendedName>
        <alternativeName>
            <fullName evidence="1">AICAR transformylase</fullName>
        </alternativeName>
    </domain>
    <domain>
        <recommendedName>
            <fullName evidence="1">IMP cyclohydrolase</fullName>
            <ecNumber evidence="1">3.5.4.10</ecNumber>
        </recommendedName>
        <alternativeName>
            <fullName evidence="1">ATIC</fullName>
        </alternativeName>
        <alternativeName>
            <fullName evidence="1">IMP synthase</fullName>
        </alternativeName>
        <alternativeName>
            <fullName evidence="1">Inosinicase</fullName>
        </alternativeName>
    </domain>
</protein>